<protein>
    <recommendedName>
        <fullName>Steroidogenic acute regulatory protein, mitochondrial</fullName>
        <shortName>StAR</shortName>
    </recommendedName>
    <alternativeName>
        <fullName>START domain-containing protein 1</fullName>
        <shortName>StARD1</shortName>
    </alternativeName>
</protein>
<organism>
    <name type="scientific">Homo sapiens</name>
    <name type="common">Human</name>
    <dbReference type="NCBI Taxonomy" id="9606"/>
    <lineage>
        <taxon>Eukaryota</taxon>
        <taxon>Metazoa</taxon>
        <taxon>Chordata</taxon>
        <taxon>Craniata</taxon>
        <taxon>Vertebrata</taxon>
        <taxon>Euteleostomi</taxon>
        <taxon>Mammalia</taxon>
        <taxon>Eutheria</taxon>
        <taxon>Euarchontoglires</taxon>
        <taxon>Primates</taxon>
        <taxon>Haplorrhini</taxon>
        <taxon>Catarrhini</taxon>
        <taxon>Hominidae</taxon>
        <taxon>Homo</taxon>
    </lineage>
</organism>
<dbReference type="EMBL" id="U17280">
    <property type="protein sequence ID" value="AAC50141.1"/>
    <property type="molecule type" value="mRNA"/>
</dbReference>
<dbReference type="EMBL" id="U29105">
    <property type="protein sequence ID" value="AAC50234.1"/>
    <property type="molecule type" value="Genomic_DNA"/>
</dbReference>
<dbReference type="EMBL" id="U29099">
    <property type="protein sequence ID" value="AAC50234.1"/>
    <property type="status" value="JOINED"/>
    <property type="molecule type" value="Genomic_DNA"/>
</dbReference>
<dbReference type="EMBL" id="U29100">
    <property type="protein sequence ID" value="AAC50234.1"/>
    <property type="status" value="JOINED"/>
    <property type="molecule type" value="Genomic_DNA"/>
</dbReference>
<dbReference type="EMBL" id="U29101">
    <property type="protein sequence ID" value="AAC50234.1"/>
    <property type="status" value="JOINED"/>
    <property type="molecule type" value="Genomic_DNA"/>
</dbReference>
<dbReference type="EMBL" id="U29102">
    <property type="protein sequence ID" value="AAC50234.1"/>
    <property type="status" value="JOINED"/>
    <property type="molecule type" value="Genomic_DNA"/>
</dbReference>
<dbReference type="EMBL" id="U29103">
    <property type="protein sequence ID" value="AAC50234.1"/>
    <property type="status" value="JOINED"/>
    <property type="molecule type" value="Genomic_DNA"/>
</dbReference>
<dbReference type="EMBL" id="U29104">
    <property type="protein sequence ID" value="AAC50234.1"/>
    <property type="status" value="JOINED"/>
    <property type="molecule type" value="Genomic_DNA"/>
</dbReference>
<dbReference type="EMBL" id="S79669">
    <property type="protein sequence ID" value="AAB35726.1"/>
    <property type="molecule type" value="mRNA"/>
</dbReference>
<dbReference type="EMBL" id="AF035277">
    <property type="protein sequence ID" value="AAB88174.1"/>
    <property type="molecule type" value="mRNA"/>
</dbReference>
<dbReference type="EMBL" id="BC010550">
    <property type="protein sequence ID" value="AAH10550.1"/>
    <property type="molecule type" value="mRNA"/>
</dbReference>
<dbReference type="CCDS" id="CCDS6102.1"/>
<dbReference type="PIR" id="I38248">
    <property type="entry name" value="I38248"/>
</dbReference>
<dbReference type="RefSeq" id="NP_000340.2">
    <property type="nucleotide sequence ID" value="NM_000349.3"/>
</dbReference>
<dbReference type="PDB" id="3P0L">
    <property type="method" value="X-ray"/>
    <property type="resolution" value="3.40 A"/>
    <property type="chains" value="A/B/C/D=66-284"/>
</dbReference>
<dbReference type="PDB" id="5OMA">
    <property type="method" value="X-ray"/>
    <property type="resolution" value="3.90 A"/>
    <property type="chains" value="A/B/C/D=54-62"/>
</dbReference>
<dbReference type="PDB" id="6T5F">
    <property type="method" value="X-ray"/>
    <property type="resolution" value="2.63 A"/>
    <property type="chains" value="E/F/G/H=192-200"/>
</dbReference>
<dbReference type="PDB" id="6T5H">
    <property type="method" value="X-ray"/>
    <property type="resolution" value="2.04 A"/>
    <property type="chains" value="A/B=54-62"/>
</dbReference>
<dbReference type="PDBsum" id="3P0L"/>
<dbReference type="PDBsum" id="5OMA"/>
<dbReference type="PDBsum" id="6T5F"/>
<dbReference type="PDBsum" id="6T5H"/>
<dbReference type="SMR" id="P49675"/>
<dbReference type="BioGRID" id="112647">
    <property type="interactions" value="11"/>
</dbReference>
<dbReference type="FunCoup" id="P49675">
    <property type="interactions" value="48"/>
</dbReference>
<dbReference type="IntAct" id="P49675">
    <property type="interactions" value="11"/>
</dbReference>
<dbReference type="STRING" id="9606.ENSP00000276449"/>
<dbReference type="SwissLipids" id="SLP:000000714"/>
<dbReference type="SwissLipids" id="SLP:000000716"/>
<dbReference type="GlyGen" id="P49675">
    <property type="glycosylation" value="1 site"/>
</dbReference>
<dbReference type="iPTMnet" id="P49675"/>
<dbReference type="PhosphoSitePlus" id="P49675"/>
<dbReference type="BioMuta" id="STAR"/>
<dbReference type="DMDM" id="71152974"/>
<dbReference type="MassIVE" id="P49675"/>
<dbReference type="PaxDb" id="9606-ENSP00000276449"/>
<dbReference type="PeptideAtlas" id="P49675"/>
<dbReference type="ProteomicsDB" id="56046"/>
<dbReference type="Pumba" id="P49675"/>
<dbReference type="Antibodypedia" id="23510">
    <property type="antibodies" value="344 antibodies from 35 providers"/>
</dbReference>
<dbReference type="DNASU" id="6770"/>
<dbReference type="Ensembl" id="ENST00000276449.9">
    <property type="protein sequence ID" value="ENSP00000276449.3"/>
    <property type="gene ID" value="ENSG00000147465.12"/>
</dbReference>
<dbReference type="GeneID" id="6770"/>
<dbReference type="KEGG" id="hsa:6770"/>
<dbReference type="MANE-Select" id="ENST00000276449.9">
    <property type="protein sequence ID" value="ENSP00000276449.3"/>
    <property type="RefSeq nucleotide sequence ID" value="NM_000349.3"/>
    <property type="RefSeq protein sequence ID" value="NP_000340.2"/>
</dbReference>
<dbReference type="AGR" id="HGNC:11359"/>
<dbReference type="CTD" id="6770"/>
<dbReference type="DisGeNET" id="6770"/>
<dbReference type="GeneCards" id="STAR"/>
<dbReference type="HGNC" id="HGNC:11359">
    <property type="gene designation" value="STAR"/>
</dbReference>
<dbReference type="HPA" id="ENSG00000147465">
    <property type="expression patterns" value="Tissue enriched (adrenal)"/>
</dbReference>
<dbReference type="MalaCards" id="STAR"/>
<dbReference type="MIM" id="201710">
    <property type="type" value="phenotype"/>
</dbReference>
<dbReference type="MIM" id="600617">
    <property type="type" value="gene"/>
</dbReference>
<dbReference type="neXtProt" id="NX_P49675"/>
<dbReference type="OpenTargets" id="ENSG00000147465"/>
<dbReference type="Orphanet" id="325524">
    <property type="disease" value="Classic congenital lipoid adrenal hyperplasia due to STAR deficency"/>
</dbReference>
<dbReference type="Orphanet" id="361">
    <property type="disease" value="Familial glucocorticoid deficiency"/>
</dbReference>
<dbReference type="Orphanet" id="325529">
    <property type="disease" value="Non-classic congenital lipoid adrenal hyperplasia due to STAR deficency"/>
</dbReference>
<dbReference type="PharmGKB" id="PA36181"/>
<dbReference type="VEuPathDB" id="HostDB:ENSG00000147465"/>
<dbReference type="eggNOG" id="KOG3845">
    <property type="taxonomic scope" value="Eukaryota"/>
</dbReference>
<dbReference type="GeneTree" id="ENSGT00940000155477"/>
<dbReference type="HOGENOM" id="CLU_093200_1_0_1"/>
<dbReference type="InParanoid" id="P49675"/>
<dbReference type="OMA" id="PTPSAWI"/>
<dbReference type="OrthoDB" id="74575at2759"/>
<dbReference type="PAN-GO" id="P49675">
    <property type="GO annotations" value="5 GO annotations based on evolutionary models"/>
</dbReference>
<dbReference type="PhylomeDB" id="P49675"/>
<dbReference type="TreeFam" id="TF313869"/>
<dbReference type="PathwayCommons" id="P49675"/>
<dbReference type="Reactome" id="R-HSA-196108">
    <property type="pathway name" value="Pregnenolone biosynthesis"/>
</dbReference>
<dbReference type="Reactome" id="R-HSA-9837999">
    <property type="pathway name" value="Mitochondrial protein degradation"/>
</dbReference>
<dbReference type="SignaLink" id="P49675"/>
<dbReference type="SIGNOR" id="P49675"/>
<dbReference type="UniPathway" id="UPA00296"/>
<dbReference type="BioGRID-ORCS" id="6770">
    <property type="hits" value="9 hits in 1156 CRISPR screens"/>
</dbReference>
<dbReference type="ChiTaRS" id="STAR">
    <property type="organism name" value="human"/>
</dbReference>
<dbReference type="EvolutionaryTrace" id="P49675"/>
<dbReference type="GenomeRNAi" id="6770"/>
<dbReference type="Pharos" id="P49675">
    <property type="development level" value="Tbio"/>
</dbReference>
<dbReference type="PRO" id="PR:P49675"/>
<dbReference type="Proteomes" id="UP000005640">
    <property type="component" value="Chromosome 8"/>
</dbReference>
<dbReference type="RNAct" id="P49675">
    <property type="molecule type" value="protein"/>
</dbReference>
<dbReference type="Bgee" id="ENSG00000147465">
    <property type="expression patterns" value="Expressed in right adrenal gland and 115 other cell types or tissues"/>
</dbReference>
<dbReference type="ExpressionAtlas" id="P49675">
    <property type="expression patterns" value="baseline and differential"/>
</dbReference>
<dbReference type="GO" id="GO:0005758">
    <property type="term" value="C:mitochondrial intermembrane space"/>
    <property type="evidence" value="ECO:0000304"/>
    <property type="project" value="Reactome"/>
</dbReference>
<dbReference type="GO" id="GO:0005759">
    <property type="term" value="C:mitochondrial matrix"/>
    <property type="evidence" value="ECO:0000304"/>
    <property type="project" value="Reactome"/>
</dbReference>
<dbReference type="GO" id="GO:0005739">
    <property type="term" value="C:mitochondrion"/>
    <property type="evidence" value="ECO:0006056"/>
    <property type="project" value="FlyBase"/>
</dbReference>
<dbReference type="GO" id="GO:0015485">
    <property type="term" value="F:cholesterol binding"/>
    <property type="evidence" value="ECO:0000314"/>
    <property type="project" value="BHF-UCL"/>
</dbReference>
<dbReference type="GO" id="GO:0120020">
    <property type="term" value="F:cholesterol transfer activity"/>
    <property type="evidence" value="ECO:0007669"/>
    <property type="project" value="InterPro"/>
</dbReference>
<dbReference type="GO" id="GO:0008203">
    <property type="term" value="P:cholesterol metabolic process"/>
    <property type="evidence" value="ECO:0007669"/>
    <property type="project" value="UniProtKB-UniPathway"/>
</dbReference>
<dbReference type="GO" id="GO:0008211">
    <property type="term" value="P:glucocorticoid metabolic process"/>
    <property type="evidence" value="ECO:0007669"/>
    <property type="project" value="Ensembl"/>
</dbReference>
<dbReference type="GO" id="GO:0032367">
    <property type="term" value="P:intracellular cholesterol transport"/>
    <property type="evidence" value="ECO:0000318"/>
    <property type="project" value="GO_Central"/>
</dbReference>
<dbReference type="GO" id="GO:0070859">
    <property type="term" value="P:positive regulation of bile acid biosynthetic process"/>
    <property type="evidence" value="ECO:0000314"/>
    <property type="project" value="BHF-UCL"/>
</dbReference>
<dbReference type="GO" id="GO:0050810">
    <property type="term" value="P:regulation of steroid biosynthetic process"/>
    <property type="evidence" value="ECO:0000318"/>
    <property type="project" value="GO_Central"/>
</dbReference>
<dbReference type="GO" id="GO:0006694">
    <property type="term" value="P:steroid biosynthetic process"/>
    <property type="evidence" value="ECO:0000318"/>
    <property type="project" value="GO_Central"/>
</dbReference>
<dbReference type="CDD" id="cd08905">
    <property type="entry name" value="START_STARD1-like"/>
    <property type="match status" value="1"/>
</dbReference>
<dbReference type="FunFam" id="3.30.530.20:FF:000015">
    <property type="entry name" value="Steroidogenic acute regulatory protein, mitochondrial"/>
    <property type="match status" value="1"/>
</dbReference>
<dbReference type="Gene3D" id="3.30.530.20">
    <property type="match status" value="1"/>
</dbReference>
<dbReference type="InterPro" id="IPR029866">
    <property type="entry name" value="StAR"/>
</dbReference>
<dbReference type="InterPro" id="IPR000799">
    <property type="entry name" value="StAR-like"/>
</dbReference>
<dbReference type="InterPro" id="IPR023393">
    <property type="entry name" value="START-like_dom_sf"/>
</dbReference>
<dbReference type="InterPro" id="IPR002913">
    <property type="entry name" value="START_lipid-bd_dom"/>
</dbReference>
<dbReference type="PANTHER" id="PTHR46489">
    <property type="entry name" value="STEROIDOGENIC ACUTE REGULATORY PROTEIN, MITOCHONDRIAL"/>
    <property type="match status" value="1"/>
</dbReference>
<dbReference type="PANTHER" id="PTHR46489:SF1">
    <property type="entry name" value="STEROIDOGENIC ACUTE REGULATORY PROTEIN, MITOCHONDRIAL"/>
    <property type="match status" value="1"/>
</dbReference>
<dbReference type="Pfam" id="PF01852">
    <property type="entry name" value="START"/>
    <property type="match status" value="1"/>
</dbReference>
<dbReference type="PRINTS" id="PR00978">
    <property type="entry name" value="STARPROTEIN"/>
</dbReference>
<dbReference type="SMART" id="SM00234">
    <property type="entry name" value="START"/>
    <property type="match status" value="1"/>
</dbReference>
<dbReference type="SUPFAM" id="SSF55961">
    <property type="entry name" value="Bet v1-like"/>
    <property type="match status" value="1"/>
</dbReference>
<dbReference type="PROSITE" id="PS50848">
    <property type="entry name" value="START"/>
    <property type="match status" value="1"/>
</dbReference>
<name>STAR_HUMAN</name>
<keyword id="KW-0002">3D-structure</keyword>
<keyword id="KW-0954">Congenital adrenal hyperplasia</keyword>
<keyword id="KW-0225">Disease variant</keyword>
<keyword id="KW-0445">Lipid transport</keyword>
<keyword id="KW-0446">Lipid-binding</keyword>
<keyword id="KW-0496">Mitochondrion</keyword>
<keyword id="KW-0597">Phosphoprotein</keyword>
<keyword id="KW-1267">Proteomics identification</keyword>
<keyword id="KW-1185">Reference proteome</keyword>
<keyword id="KW-0755">Steroidogenesis</keyword>
<keyword id="KW-0809">Transit peptide</keyword>
<keyword id="KW-0813">Transport</keyword>
<accession>P49675</accession>
<accession>Q16396</accession>
<feature type="transit peptide" description="Mitochondrion" evidence="1">
    <location>
        <begin position="1"/>
        <end position="63"/>
    </location>
</feature>
<feature type="chain" id="PRO_0000033316" description="Steroidogenic acute regulatory protein, mitochondrial">
    <location>
        <begin position="64"/>
        <end position="285"/>
    </location>
</feature>
<feature type="domain" description="START" evidence="4">
    <location>
        <begin position="67"/>
        <end position="280"/>
    </location>
</feature>
<feature type="modified residue" description="Phosphoserine; by PKA" evidence="5">
    <location>
        <position position="57"/>
    </location>
</feature>
<feature type="modified residue" description="Phosphoserine; by PKA" evidence="5">
    <location>
        <position position="195"/>
    </location>
</feature>
<feature type="sequence variant" id="VAR_034520" description="In dbSNP:rs34908868.">
    <original>R</original>
    <variation>W</variation>
    <location>
        <position position="121"/>
    </location>
</feature>
<feature type="sequence variant" id="VAR_014236" description="In AH1; partial loss of activity; dbSNP:rs1254559989." evidence="10">
    <original>E</original>
    <variation>G</variation>
    <location>
        <position position="169"/>
    </location>
</feature>
<feature type="sequence variant" id="VAR_014237" description="In AH1; partial loss of activity; dbSNP:rs747169620." evidence="10">
    <original>E</original>
    <variation>K</variation>
    <location>
        <position position="169"/>
    </location>
</feature>
<feature type="sequence variant" id="VAR_005627" description="In AH1; partial loss of activity; dbSNP:rs104894086." evidence="10">
    <original>R</original>
    <variation>L</variation>
    <location>
        <position position="182"/>
    </location>
</feature>
<feature type="sequence variant" id="VAR_005628" description="In dbSNP:rs1042854." evidence="7 8 12">
    <original>A</original>
    <variation>D</variation>
    <location>
        <position position="203"/>
    </location>
</feature>
<feature type="sequence variant" id="VAR_014238" description="In AH1; dbSNP:rs137852689." evidence="6">
    <original>R</original>
    <variation>T</variation>
    <location>
        <position position="217"/>
    </location>
</feature>
<feature type="sequence variant" id="VAR_014239" description="In AH1; partial loss of activity; dbSNP:rs137852690." evidence="6 10 11">
    <original>A</original>
    <variation>V</variation>
    <location>
        <position position="218"/>
    </location>
</feature>
<feature type="sequence variant" id="VAR_014240" description="In AH1; dbSNP:rs1446362214." evidence="11">
    <original>M</original>
    <variation>T</variation>
    <location>
        <position position="225"/>
    </location>
</feature>
<feature type="sequence variant" id="VAR_014241" description="In AH1; partial loss of activity." evidence="10">
    <location>
        <position position="272"/>
    </location>
</feature>
<feature type="sequence variant" id="VAR_014242" description="In AH1; partial loss of activity; dbSNP:rs762245736." evidence="10">
    <original>L</original>
    <variation>P</variation>
    <location>
        <position position="275"/>
    </location>
</feature>
<feature type="helix" evidence="14">
    <location>
        <begin position="70"/>
        <end position="91"/>
    </location>
</feature>
<feature type="strand" evidence="14">
    <location>
        <begin position="97"/>
        <end position="101"/>
    </location>
</feature>
<feature type="strand" evidence="14">
    <location>
        <begin position="107"/>
        <end position="112"/>
    </location>
</feature>
<feature type="strand" evidence="14">
    <location>
        <begin position="114"/>
        <end position="116"/>
    </location>
</feature>
<feature type="strand" evidence="14">
    <location>
        <begin position="118"/>
        <end position="128"/>
    </location>
</feature>
<feature type="helix" evidence="14">
    <location>
        <begin position="130"/>
        <end position="137"/>
    </location>
</feature>
<feature type="turn" evidence="14">
    <location>
        <begin position="138"/>
        <end position="140"/>
    </location>
</feature>
<feature type="helix" evidence="14">
    <location>
        <begin position="141"/>
        <end position="143"/>
    </location>
</feature>
<feature type="strand" evidence="14">
    <location>
        <begin position="152"/>
        <end position="159"/>
    </location>
</feature>
<feature type="strand" evidence="14">
    <location>
        <begin position="161"/>
        <end position="171"/>
    </location>
</feature>
<feature type="strand" evidence="14">
    <location>
        <begin position="182"/>
        <end position="192"/>
    </location>
</feature>
<feature type="strand" evidence="14">
    <location>
        <begin position="197"/>
        <end position="199"/>
    </location>
</feature>
<feature type="strand" evidence="14">
    <location>
        <begin position="215"/>
        <end position="217"/>
    </location>
</feature>
<feature type="strand" evidence="14">
    <location>
        <begin position="224"/>
        <end position="230"/>
    </location>
</feature>
<feature type="strand" evidence="14">
    <location>
        <begin position="233"/>
        <end position="243"/>
    </location>
</feature>
<feature type="helix" evidence="14">
    <location>
        <begin position="253"/>
        <end position="274"/>
    </location>
</feature>
<evidence type="ECO:0000250" key="1"/>
<evidence type="ECO:0000250" key="2">
    <source>
        <dbReference type="UniProtKB" id="P51557"/>
    </source>
</evidence>
<evidence type="ECO:0000250" key="3">
    <source>
        <dbReference type="UniProtKB" id="P79245"/>
    </source>
</evidence>
<evidence type="ECO:0000255" key="4">
    <source>
        <dbReference type="PROSITE-ProRule" id="PRU00197"/>
    </source>
</evidence>
<evidence type="ECO:0000269" key="5">
    <source>
    </source>
</evidence>
<evidence type="ECO:0000269" key="6">
    <source>
    </source>
</evidence>
<evidence type="ECO:0000269" key="7">
    <source>
    </source>
</evidence>
<evidence type="ECO:0000269" key="8">
    <source>
    </source>
</evidence>
<evidence type="ECO:0000269" key="9">
    <source>
    </source>
</evidence>
<evidence type="ECO:0000269" key="10">
    <source>
    </source>
</evidence>
<evidence type="ECO:0000269" key="11">
    <source>
    </source>
</evidence>
<evidence type="ECO:0000269" key="12">
    <source>
    </source>
</evidence>
<evidence type="ECO:0000305" key="13">
    <source>
    </source>
</evidence>
<evidence type="ECO:0007829" key="14">
    <source>
        <dbReference type="PDB" id="3P0L"/>
    </source>
</evidence>
<reference key="1">
    <citation type="journal article" date="1995" name="Proc. Natl. Acad. Sci. U.S.A.">
        <title>Human steroidogenic acute regulatory protein: functional activity in COS-1 cells, tissue-specific expression, and mapping of the structural gene to 8p11.2 and a pseudogene to chromosome 13.</title>
        <authorList>
            <person name="Sugawara T."/>
            <person name="Holt J.A."/>
            <person name="Driscoll D."/>
            <person name="Strauss J.F. III"/>
            <person name="Lin D."/>
            <person name="Miller W.L."/>
            <person name="Patterson D."/>
            <person name="Clancy K.P."/>
            <person name="Hart I.M."/>
            <person name="Clark B.J."/>
            <person name="Stocco D.M."/>
        </authorList>
    </citation>
    <scope>NUCLEOTIDE SEQUENCE [MRNA]</scope>
    <scope>VARIANT ASP-203</scope>
    <scope>FUNCTION</scope>
    <scope>CATALYTIC ACTIVITY</scope>
    <source>
        <tissue>Adrenal cortex</tissue>
    </source>
</reference>
<reference key="2">
    <citation type="journal article" date="1995" name="Biochemistry">
        <title>Structure of the human steroidogenic acute regulatory protein (StAR) gene: StAR stimulates mitochondrial cholesterol 27-hydroxylase activity.</title>
        <authorList>
            <person name="Sugawara T."/>
            <person name="Lin D."/>
            <person name="Holt J.A."/>
            <person name="Martin K.O."/>
            <person name="Javitt N.B."/>
            <person name="Miller W.L."/>
            <person name="Strauss J.F. III"/>
        </authorList>
    </citation>
    <scope>NUCLEOTIDE SEQUENCE [GENOMIC DNA]</scope>
    <scope>VARIANT ASP-203</scope>
    <source>
        <tissue>Placenta</tissue>
    </source>
</reference>
<reference key="3">
    <citation type="journal article" date="1995" name="Biochim. Biophys. Acta">
        <title>The human steroidogenic acute regulatory (StAR) gene is expressed in the urogenital system and encodes a mitochondrial polypeptide.</title>
        <authorList>
            <person name="Gradi A."/>
            <person name="Tang-Wai R."/>
            <person name="McBride H.M."/>
            <person name="Chu L.L."/>
            <person name="Shore G.C."/>
            <person name="Pelletier J."/>
        </authorList>
    </citation>
    <scope>NUCLEOTIDE SEQUENCE [MRNA]</scope>
</reference>
<reference key="4">
    <citation type="submission" date="1997-11" db="EMBL/GenBank/DDBJ databases">
        <authorList>
            <person name="Yu W."/>
            <person name="Sarginson J."/>
            <person name="Gibbs R.A."/>
        </authorList>
    </citation>
    <scope>NUCLEOTIDE SEQUENCE [LARGE SCALE MRNA]</scope>
    <source>
        <tissue>Brain</tissue>
    </source>
</reference>
<reference key="5">
    <citation type="journal article" date="2004" name="Genome Res.">
        <title>The status, quality, and expansion of the NIH full-length cDNA project: the Mammalian Gene Collection (MGC).</title>
        <authorList>
            <consortium name="The MGC Project Team"/>
        </authorList>
    </citation>
    <scope>NUCLEOTIDE SEQUENCE [LARGE SCALE MRNA]</scope>
    <source>
        <tissue>Brain</tissue>
    </source>
</reference>
<reference key="6">
    <citation type="journal article" date="1999" name="Recent Prog. Horm. Res.">
        <title>The steroidogenic acute regulatory protein (StAR): a window into the complexities of intracellular cholesterol trafficking.</title>
        <authorList>
            <person name="Strauss J.F. III"/>
            <person name="Kallen C.B."/>
            <person name="Christenson L.K."/>
            <person name="Watari H."/>
            <person name="Devoto L."/>
            <person name="Arakane F."/>
            <person name="Kiriakidou M."/>
            <person name="Sugawara T."/>
        </authorList>
    </citation>
    <scope>PHOSPHORYLATION AT SER-57 AND SER-195</scope>
</reference>
<reference key="7">
    <citation type="journal article" date="2011" name="PLoS ONE">
        <title>Comparative structural analysis of lipid binding START domains.</title>
        <authorList>
            <person name="Thorsell A.G."/>
            <person name="Lee W.H."/>
            <person name="Persson C."/>
            <person name="Siponen M.I."/>
            <person name="Nilsson M."/>
            <person name="Busam R.D."/>
            <person name="Kotenyova T."/>
            <person name="Schuler H."/>
            <person name="Lehtio L."/>
        </authorList>
    </citation>
    <scope>X-RAY CRYSTALLOGRAPHY (3.40 ANGSTROMS) OF 66-284</scope>
</reference>
<reference key="8">
    <citation type="journal article" date="1995" name="Science">
        <title>Role of steroidogenic acute regulatory protein in adrenal and gonadal steroidogenesis.</title>
        <authorList>
            <person name="Lin D."/>
            <person name="Sugawara T."/>
            <person name="Strauss J.F. III"/>
            <person name="Clark B.J."/>
            <person name="Stocco D.M."/>
            <person name="Saenger P."/>
            <person name="Rogol A."/>
            <person name="Miller W.L."/>
        </authorList>
    </citation>
    <scope>CATALYTIC ACTIVITY</scope>
    <scope>INVOLVEMENT IN AH1</scope>
    <scope>FUNCTION</scope>
</reference>
<reference key="9">
    <citation type="journal article" date="1996" name="N. Engl. J. Med.">
        <title>The pathophysiology and genetics of congenital lipoid adrenal hyperplasia.</title>
        <authorList>
            <person name="Bose H.S."/>
            <person name="Sugawara T."/>
            <person name="Strauss J.F. III"/>
            <person name="Miller W.L."/>
        </authorList>
    </citation>
    <scope>VARIANTS AH1 GLY-169; LYS-169; LEU-182; VAL-218; ARG-272 DEL AND PRO-275</scope>
    <scope>CHARACTERIZATION OF VARIANTS AH1 GLY-169; LYS-169; LEU-182; VAL-218; ARG-272 DEL AND PRO-275</scope>
    <scope>CATALYTIC ACTIVITY</scope>
</reference>
<reference key="10">
    <citation type="journal article" date="1997" name="Hum. Mol. Genet.">
        <title>Analysis of the steroidogenic acute regulatory protein (StAR) gene in Japanese patients with congenital lipoid adrenal hyperplasia.</title>
        <authorList>
            <person name="Nakae J."/>
            <person name="Tajima T."/>
            <person name="Sugawara T."/>
            <person name="Arakane F."/>
            <person name="Hanaki K."/>
            <person name="Hotsubo T."/>
            <person name="Igarashi N."/>
            <person name="Igarashi Y."/>
            <person name="Ishii T."/>
            <person name="Koda N."/>
            <person name="Kondo T."/>
            <person name="Kohno H."/>
            <person name="Nakagawa Y."/>
            <person name="Tachibana K."/>
            <person name="Takeshima Y."/>
            <person name="Tsubouchi K."/>
            <person name="Strauss J.F. III"/>
            <person name="Fujieda K."/>
        </authorList>
    </citation>
    <scope>VARIANTS AH1 VAL-218 AND THR-225</scope>
</reference>
<reference key="11">
    <citation type="journal article" date="1998" name="Hum. Mutat. Suppl.">
        <title>A novel frameshift mutation 840delA and a novel polymorphism D203A in the steroidogenic acute regulatory protein gene in a Japanese patient with congenital lipoid adrenal hyperplasia.</title>
        <authorList>
            <person name="Katsumata N."/>
            <person name="Tanae A."/>
            <person name="Shinagawa T."/>
            <person name="Nagashima-Miyokawa A."/>
            <person name="Shimizu M."/>
            <person name="Yasunaga T."/>
            <person name="Tanaka T."/>
            <person name="Hibi I."/>
        </authorList>
    </citation>
    <scope>VARIANT ASP-203</scope>
</reference>
<reference key="12">
    <citation type="journal article" date="1999" name="J. Clin. Endocrinol. Metab.">
        <title>A novel compound heterozygous mutation in the steroidogenic acute regulatory protein gene in a patient with congenital lipoid adrenal hyperplasia.</title>
        <authorList>
            <person name="Katsumata N."/>
            <person name="Kawada Y."/>
            <person name="Yamamoto Y."/>
            <person name="Noda M."/>
            <person name="Nimura A."/>
            <person name="Horikawa R."/>
            <person name="Tanaka T."/>
        </authorList>
    </citation>
    <scope>VARIANTS AH1 THR-217 AND VAL-218</scope>
</reference>
<proteinExistence type="evidence at protein level"/>
<gene>
    <name type="primary">STAR</name>
    <name type="synonym">STARD1</name>
</gene>
<comment type="function">
    <text evidence="8 9 10">Plays a key role in steroid hormone synthesis by enhancing the metabolism of cholesterol into pregnenolone. Mediates the transfer of cholesterol from the outer mitochondrial membrane to the inner mitochondrial membrane where it is cleaved to pregnenolone.</text>
</comment>
<comment type="catalytic activity">
    <reaction evidence="8 9">
        <text>cholesterol(in) = cholesterol(out)</text>
        <dbReference type="Rhea" id="RHEA:39747"/>
        <dbReference type="ChEBI" id="CHEBI:16113"/>
    </reaction>
</comment>
<comment type="pathway">
    <text evidence="13">Steroid metabolism; cholesterol metabolism.</text>
</comment>
<comment type="subunit">
    <text evidence="3">May interact with TSPO.</text>
</comment>
<comment type="interaction">
    <interactant intactId="EBI-722932">
        <id>P49675</id>
    </interactant>
    <interactant intactId="EBI-11522760">
        <id>Q6RW13-2</id>
        <label>AGTRAP</label>
    </interactant>
    <organismsDiffer>false</organismsDiffer>
    <experiments>3</experiments>
</comment>
<comment type="interaction">
    <interactant intactId="EBI-722932">
        <id>P49675</id>
    </interactant>
    <interactant intactId="EBI-17278014">
        <id>Q8IZR5-2</id>
        <label>CMTM4</label>
    </interactant>
    <organismsDiffer>false</organismsDiffer>
    <experiments>3</experiments>
</comment>
<comment type="interaction">
    <interactant intactId="EBI-722932">
        <id>P49675</id>
    </interactant>
    <interactant intactId="EBI-12831978">
        <id>Q6ZPD8</id>
        <label>DGAT2L6</label>
    </interactant>
    <organismsDiffer>false</organismsDiffer>
    <experiments>3</experiments>
</comment>
<comment type="interaction">
    <interactant intactId="EBI-722932">
        <id>P49675</id>
    </interactant>
    <interactant intactId="EBI-466029">
        <id>P42858</id>
        <label>HTT</label>
    </interactant>
    <organismsDiffer>false</organismsDiffer>
    <experiments>3</experiments>
</comment>
<comment type="interaction">
    <interactant intactId="EBI-722932">
        <id>P49675</id>
    </interactant>
    <interactant intactId="EBI-11525615">
        <id>G5E962</id>
        <label>MAGEA11</label>
    </interactant>
    <organismsDiffer>false</organismsDiffer>
    <experiments>3</experiments>
</comment>
<comment type="interaction">
    <interactant intactId="EBI-722932">
        <id>P49675</id>
    </interactant>
    <interactant intactId="EBI-739552">
        <id>P43364</id>
        <label>MAGEA11</label>
    </interactant>
    <organismsDiffer>false</organismsDiffer>
    <experiments>6</experiments>
</comment>
<comment type="interaction">
    <interactant intactId="EBI-722932">
        <id>P49675</id>
    </interactant>
    <interactant intactId="EBI-10178634">
        <id>P43364-2</id>
        <label>MAGEA11</label>
    </interactant>
    <organismsDiffer>false</organismsDiffer>
    <experiments>3</experiments>
</comment>
<comment type="interaction">
    <interactant intactId="EBI-722932">
        <id>P49675</id>
    </interactant>
    <interactant intactId="EBI-447043">
        <id>Q15276</id>
        <label>RABEP1</label>
    </interactant>
    <organismsDiffer>false</organismsDiffer>
    <experiments>3</experiments>
</comment>
<comment type="interaction">
    <interactant intactId="EBI-722932">
        <id>P49675</id>
    </interactant>
    <interactant intactId="EBI-12828299">
        <id>O60906</id>
        <label>SMPD2</label>
    </interactant>
    <organismsDiffer>false</organismsDiffer>
    <experiments>3</experiments>
</comment>
<comment type="interaction">
    <interactant intactId="EBI-722932">
        <id>P49675</id>
    </interactant>
    <interactant intactId="EBI-727240">
        <id>Q9UNK0</id>
        <label>STX8</label>
    </interactant>
    <organismsDiffer>false</organismsDiffer>
    <experiments>3</experiments>
</comment>
<comment type="subcellular location">
    <subcellularLocation>
        <location evidence="2">Mitochondrion</location>
    </subcellularLocation>
</comment>
<comment type="tissue specificity">
    <text>Expressed in gonads, adrenal cortex and kidney.</text>
</comment>
<comment type="disease" evidence="6 9 10 11">
    <disease id="DI-01407">
        <name>Adrenal hyperplasia 1</name>
        <acronym>AH1</acronym>
        <description>The most severe form of adrenal hyperplasia. It is a condition characterized by onset of profound adrenocortical insufficiency shortly after birth, hyperpigmentation reflecting increased production of pro-opiomelanocortin, elevated plasma renin activity as a consequence of reduced aldosterone synthesis, and male pseudohermaphroditism resulting from deficient fetal testicular testosterone synthesis. Affected individuals are phenotypic females irrespective of gonadal sex, and frequently die in infancy if mineralocorticoid and glucocorticoid replacement are not instituted.</description>
        <dbReference type="MIM" id="201710"/>
    </disease>
    <text>The disease is caused by variants affecting the gene represented in this entry.</text>
</comment>
<comment type="online information" name="Wikipedia">
    <link uri="https://en.wikipedia.org/wiki/Steroidogenic_acute_regulatory_protein"/>
    <text>Steroidogenic acute regulatory protein entry</text>
</comment>
<sequence>MLLATFKLCAGSSYRHMRNMKGLRQQAVMAISQELNRRALGGPTPSTWINQVRRRSSLLGSRLEETLYSDQELAYLQQGEEAMQKALGILSNQEGWKKESQQDNGDKVMSKVVPDVGKVFRLEVVVDQPMERLYEELVERMEAMGEWNPNVKEIKVLQKIGKDTFITHELAAEAAGNLVGPRDFVSVRCAKRRGSTCVLAGMATDFGNMPEQKGVIRAEHGPTCMVLHPLAGSPSKTKLTWLLSIDLKGWLPKSIINQVLSQTQVDFANHLRKRLESHPASEARC</sequence>